<keyword id="KW-0285">Flavoprotein</keyword>
<keyword id="KW-0288">FMN</keyword>
<keyword id="KW-0520">NAD</keyword>
<keyword id="KW-0560">Oxidoreductase</keyword>
<reference key="1">
    <citation type="journal article" date="2009" name="Genome Biol.">
        <title>Genomic and genetic analyses of diversity and plant interactions of Pseudomonas fluorescens.</title>
        <authorList>
            <person name="Silby M.W."/>
            <person name="Cerdeno-Tarraga A.M."/>
            <person name="Vernikos G.S."/>
            <person name="Giddens S.R."/>
            <person name="Jackson R.W."/>
            <person name="Preston G.M."/>
            <person name="Zhang X.-X."/>
            <person name="Moon C.D."/>
            <person name="Gehrig S.M."/>
            <person name="Godfrey S.A.C."/>
            <person name="Knight C.G."/>
            <person name="Malone J.G."/>
            <person name="Robinson Z."/>
            <person name="Spiers A.J."/>
            <person name="Harris S."/>
            <person name="Challis G.L."/>
            <person name="Yaxley A.M."/>
            <person name="Harris D."/>
            <person name="Seeger K."/>
            <person name="Murphy L."/>
            <person name="Rutter S."/>
            <person name="Squares R."/>
            <person name="Quail M.A."/>
            <person name="Saunders E."/>
            <person name="Mavromatis K."/>
            <person name="Brettin T.S."/>
            <person name="Bentley S.D."/>
            <person name="Hothersall J."/>
            <person name="Stephens E."/>
            <person name="Thomas C.M."/>
            <person name="Parkhill J."/>
            <person name="Levy S.B."/>
            <person name="Rainey P.B."/>
            <person name="Thomson N.R."/>
        </authorList>
    </citation>
    <scope>NUCLEOTIDE SEQUENCE [LARGE SCALE GENOMIC DNA]</scope>
    <source>
        <strain>Pf0-1</strain>
    </source>
</reference>
<name>AZOR1_PSEPF</name>
<evidence type="ECO:0000255" key="1">
    <source>
        <dbReference type="HAMAP-Rule" id="MF_01216"/>
    </source>
</evidence>
<accession>Q3KIU3</accession>
<sequence>MSKILAIHASPRGERSHSRRLAETFLSAWQVRHPQAQVTRREVGRALIPAVNEAFVAAAFYPEPEARPLTMQADLALSDQLVGELFDHDLLLISTPMYNFNVPSGLKAWVDQIVRLGLTFDHTLDNGIAQYTPLLHGKKALIVTSRGGFGFGPGGELEALNHADPWLRTALGFIGINDVTVVAAEGEESAERTFAVSVAEAEQRLLDLARAF</sequence>
<dbReference type="EC" id="1.6.5.-" evidence="1"/>
<dbReference type="EC" id="1.7.1.17" evidence="1"/>
<dbReference type="EMBL" id="CP000094">
    <property type="protein sequence ID" value="ABA72313.1"/>
    <property type="molecule type" value="Genomic_DNA"/>
</dbReference>
<dbReference type="RefSeq" id="WP_011332219.1">
    <property type="nucleotide sequence ID" value="NC_007492.2"/>
</dbReference>
<dbReference type="SMR" id="Q3KIU3"/>
<dbReference type="KEGG" id="pfo:Pfl01_0569"/>
<dbReference type="eggNOG" id="COG1182">
    <property type="taxonomic scope" value="Bacteria"/>
</dbReference>
<dbReference type="HOGENOM" id="CLU_088964_0_0_6"/>
<dbReference type="Proteomes" id="UP000002704">
    <property type="component" value="Chromosome"/>
</dbReference>
<dbReference type="GO" id="GO:0009055">
    <property type="term" value="F:electron transfer activity"/>
    <property type="evidence" value="ECO:0007669"/>
    <property type="project" value="UniProtKB-UniRule"/>
</dbReference>
<dbReference type="GO" id="GO:0010181">
    <property type="term" value="F:FMN binding"/>
    <property type="evidence" value="ECO:0007669"/>
    <property type="project" value="UniProtKB-UniRule"/>
</dbReference>
<dbReference type="GO" id="GO:0016652">
    <property type="term" value="F:oxidoreductase activity, acting on NAD(P)H as acceptor"/>
    <property type="evidence" value="ECO:0007669"/>
    <property type="project" value="UniProtKB-UniRule"/>
</dbReference>
<dbReference type="GO" id="GO:0016655">
    <property type="term" value="F:oxidoreductase activity, acting on NAD(P)H, quinone or similar compound as acceptor"/>
    <property type="evidence" value="ECO:0007669"/>
    <property type="project" value="InterPro"/>
</dbReference>
<dbReference type="Gene3D" id="3.40.50.360">
    <property type="match status" value="1"/>
</dbReference>
<dbReference type="HAMAP" id="MF_01216">
    <property type="entry name" value="Azoreductase_type1"/>
    <property type="match status" value="1"/>
</dbReference>
<dbReference type="InterPro" id="IPR003680">
    <property type="entry name" value="Flavodoxin_fold"/>
</dbReference>
<dbReference type="InterPro" id="IPR029039">
    <property type="entry name" value="Flavoprotein-like_sf"/>
</dbReference>
<dbReference type="InterPro" id="IPR050104">
    <property type="entry name" value="FMN-dep_NADH:Q_OxRdtase_AzoR1"/>
</dbReference>
<dbReference type="InterPro" id="IPR023048">
    <property type="entry name" value="NADH:quinone_OxRdtase_FMN_depd"/>
</dbReference>
<dbReference type="PANTHER" id="PTHR43741">
    <property type="entry name" value="FMN-DEPENDENT NADH-AZOREDUCTASE 1"/>
    <property type="match status" value="1"/>
</dbReference>
<dbReference type="PANTHER" id="PTHR43741:SF2">
    <property type="entry name" value="FMN-DEPENDENT NADH:QUINONE OXIDOREDUCTASE"/>
    <property type="match status" value="1"/>
</dbReference>
<dbReference type="Pfam" id="PF02525">
    <property type="entry name" value="Flavodoxin_2"/>
    <property type="match status" value="1"/>
</dbReference>
<dbReference type="SUPFAM" id="SSF52218">
    <property type="entry name" value="Flavoproteins"/>
    <property type="match status" value="1"/>
</dbReference>
<proteinExistence type="inferred from homology"/>
<feature type="chain" id="PRO_0000245949" description="FMN-dependent NADH:quinone oxidoreductase 1">
    <location>
        <begin position="1"/>
        <end position="212"/>
    </location>
</feature>
<feature type="binding site" evidence="1">
    <location>
        <position position="10"/>
    </location>
    <ligand>
        <name>FMN</name>
        <dbReference type="ChEBI" id="CHEBI:58210"/>
    </ligand>
</feature>
<feature type="binding site" evidence="1">
    <location>
        <begin position="16"/>
        <end position="18"/>
    </location>
    <ligand>
        <name>FMN</name>
        <dbReference type="ChEBI" id="CHEBI:58210"/>
    </ligand>
</feature>
<feature type="binding site" evidence="1">
    <location>
        <begin position="97"/>
        <end position="100"/>
    </location>
    <ligand>
        <name>FMN</name>
        <dbReference type="ChEBI" id="CHEBI:58210"/>
    </ligand>
</feature>
<feature type="binding site" evidence="1">
    <location>
        <begin position="145"/>
        <end position="148"/>
    </location>
    <ligand>
        <name>FMN</name>
        <dbReference type="ChEBI" id="CHEBI:58210"/>
    </ligand>
</feature>
<protein>
    <recommendedName>
        <fullName evidence="1">FMN-dependent NADH:quinone oxidoreductase 1</fullName>
        <ecNumber evidence="1">1.6.5.-</ecNumber>
    </recommendedName>
    <alternativeName>
        <fullName evidence="1">Azo-dye reductase 1</fullName>
    </alternativeName>
    <alternativeName>
        <fullName evidence="1">FMN-dependent NADH-azo compound oxidoreductase 1</fullName>
    </alternativeName>
    <alternativeName>
        <fullName evidence="1">FMN-dependent NADH-azoreductase 1</fullName>
        <ecNumber evidence="1">1.7.1.17</ecNumber>
    </alternativeName>
</protein>
<gene>
    <name evidence="1" type="primary">azoR1</name>
    <name type="ordered locus">Pfl01_0569</name>
</gene>
<comment type="function">
    <text evidence="1">Quinone reductase that provides resistance to thiol-specific stress caused by electrophilic quinones.</text>
</comment>
<comment type="function">
    <text evidence="1">Also exhibits azoreductase activity. Catalyzes the reductive cleavage of the azo bond in aromatic azo compounds to the corresponding amines.</text>
</comment>
<comment type="catalytic activity">
    <reaction evidence="1">
        <text>2 a quinone + NADH + H(+) = 2 a 1,4-benzosemiquinone + NAD(+)</text>
        <dbReference type="Rhea" id="RHEA:65952"/>
        <dbReference type="ChEBI" id="CHEBI:15378"/>
        <dbReference type="ChEBI" id="CHEBI:57540"/>
        <dbReference type="ChEBI" id="CHEBI:57945"/>
        <dbReference type="ChEBI" id="CHEBI:132124"/>
        <dbReference type="ChEBI" id="CHEBI:134225"/>
    </reaction>
</comment>
<comment type="catalytic activity">
    <reaction evidence="1">
        <text>N,N-dimethyl-1,4-phenylenediamine + anthranilate + 2 NAD(+) = 2-(4-dimethylaminophenyl)diazenylbenzoate + 2 NADH + 2 H(+)</text>
        <dbReference type="Rhea" id="RHEA:55872"/>
        <dbReference type="ChEBI" id="CHEBI:15378"/>
        <dbReference type="ChEBI" id="CHEBI:15783"/>
        <dbReference type="ChEBI" id="CHEBI:16567"/>
        <dbReference type="ChEBI" id="CHEBI:57540"/>
        <dbReference type="ChEBI" id="CHEBI:57945"/>
        <dbReference type="ChEBI" id="CHEBI:71579"/>
        <dbReference type="EC" id="1.7.1.17"/>
    </reaction>
</comment>
<comment type="cofactor">
    <cofactor evidence="1">
        <name>FMN</name>
        <dbReference type="ChEBI" id="CHEBI:58210"/>
    </cofactor>
    <text evidence="1">Binds 1 FMN per subunit.</text>
</comment>
<comment type="subunit">
    <text evidence="1">Homodimer.</text>
</comment>
<comment type="similarity">
    <text evidence="1">Belongs to the azoreductase type 1 family.</text>
</comment>
<organism>
    <name type="scientific">Pseudomonas fluorescens (strain Pf0-1)</name>
    <dbReference type="NCBI Taxonomy" id="205922"/>
    <lineage>
        <taxon>Bacteria</taxon>
        <taxon>Pseudomonadati</taxon>
        <taxon>Pseudomonadota</taxon>
        <taxon>Gammaproteobacteria</taxon>
        <taxon>Pseudomonadales</taxon>
        <taxon>Pseudomonadaceae</taxon>
        <taxon>Pseudomonas</taxon>
    </lineage>
</organism>